<protein>
    <recommendedName>
        <fullName evidence="1">Lipoprotein signal peptidase</fullName>
        <ecNumber evidence="1">3.4.23.36</ecNumber>
    </recommendedName>
    <alternativeName>
        <fullName evidence="1">Prolipoprotein signal peptidase</fullName>
    </alternativeName>
    <alternativeName>
        <fullName evidence="1">Signal peptidase II</fullName>
        <shortName evidence="1">SPase II</shortName>
    </alternativeName>
</protein>
<organism>
    <name type="scientific">Escherichia coli O157:H7 (strain EC4115 / EHEC)</name>
    <dbReference type="NCBI Taxonomy" id="444450"/>
    <lineage>
        <taxon>Bacteria</taxon>
        <taxon>Pseudomonadati</taxon>
        <taxon>Pseudomonadota</taxon>
        <taxon>Gammaproteobacteria</taxon>
        <taxon>Enterobacterales</taxon>
        <taxon>Enterobacteriaceae</taxon>
        <taxon>Escherichia</taxon>
    </lineage>
</organism>
<dbReference type="EC" id="3.4.23.36" evidence="1"/>
<dbReference type="EMBL" id="CP001164">
    <property type="protein sequence ID" value="ACI38520.1"/>
    <property type="molecule type" value="Genomic_DNA"/>
</dbReference>
<dbReference type="RefSeq" id="WP_000083385.1">
    <property type="nucleotide sequence ID" value="NC_011353.1"/>
</dbReference>
<dbReference type="SMR" id="B5YYB9"/>
<dbReference type="MEROPS" id="A08.001"/>
<dbReference type="KEGG" id="ecf:ECH74115_0029"/>
<dbReference type="HOGENOM" id="CLU_083252_4_0_6"/>
<dbReference type="UniPathway" id="UPA00665"/>
<dbReference type="GO" id="GO:0005886">
    <property type="term" value="C:plasma membrane"/>
    <property type="evidence" value="ECO:0007669"/>
    <property type="project" value="UniProtKB-SubCell"/>
</dbReference>
<dbReference type="GO" id="GO:0004190">
    <property type="term" value="F:aspartic-type endopeptidase activity"/>
    <property type="evidence" value="ECO:0007669"/>
    <property type="project" value="UniProtKB-UniRule"/>
</dbReference>
<dbReference type="GO" id="GO:0006508">
    <property type="term" value="P:proteolysis"/>
    <property type="evidence" value="ECO:0007669"/>
    <property type="project" value="UniProtKB-KW"/>
</dbReference>
<dbReference type="HAMAP" id="MF_00161">
    <property type="entry name" value="LspA"/>
    <property type="match status" value="1"/>
</dbReference>
<dbReference type="InterPro" id="IPR001872">
    <property type="entry name" value="Peptidase_A8"/>
</dbReference>
<dbReference type="NCBIfam" id="TIGR00077">
    <property type="entry name" value="lspA"/>
    <property type="match status" value="1"/>
</dbReference>
<dbReference type="PANTHER" id="PTHR33695">
    <property type="entry name" value="LIPOPROTEIN SIGNAL PEPTIDASE"/>
    <property type="match status" value="1"/>
</dbReference>
<dbReference type="PANTHER" id="PTHR33695:SF1">
    <property type="entry name" value="LIPOPROTEIN SIGNAL PEPTIDASE"/>
    <property type="match status" value="1"/>
</dbReference>
<dbReference type="Pfam" id="PF01252">
    <property type="entry name" value="Peptidase_A8"/>
    <property type="match status" value="1"/>
</dbReference>
<dbReference type="PRINTS" id="PR00781">
    <property type="entry name" value="LIPOSIGPTASE"/>
</dbReference>
<dbReference type="PROSITE" id="PS00855">
    <property type="entry name" value="SPASE_II"/>
    <property type="match status" value="1"/>
</dbReference>
<sequence>MSQSICSTGLRWLWLVVVVLIIDLGSKYLILQNFALGDTVPLFPSLNLHYARNYGAAFSFLADSGGWQRWFFAGIAIGISVTLVVMMYRSKATQKLNNIAYALIIGGALGNLFDRLWHGFVVDMIDFYVGDWHFATFNLADTAICVGAALIVLEGFLPSKAKKQ</sequence>
<reference key="1">
    <citation type="journal article" date="2011" name="Proc. Natl. Acad. Sci. U.S.A.">
        <title>Genomic anatomy of Escherichia coli O157:H7 outbreaks.</title>
        <authorList>
            <person name="Eppinger M."/>
            <person name="Mammel M.K."/>
            <person name="Leclerc J.E."/>
            <person name="Ravel J."/>
            <person name="Cebula T.A."/>
        </authorList>
    </citation>
    <scope>NUCLEOTIDE SEQUENCE [LARGE SCALE GENOMIC DNA]</scope>
    <source>
        <strain>EC4115 / EHEC</strain>
    </source>
</reference>
<evidence type="ECO:0000255" key="1">
    <source>
        <dbReference type="HAMAP-Rule" id="MF_00161"/>
    </source>
</evidence>
<proteinExistence type="inferred from homology"/>
<name>LSPA_ECO5E</name>
<accession>B5YYB9</accession>
<comment type="function">
    <text evidence="1">This protein specifically catalyzes the removal of signal peptides from prolipoproteins.</text>
</comment>
<comment type="catalytic activity">
    <reaction evidence="1">
        <text>Release of signal peptides from bacterial membrane prolipoproteins. Hydrolyzes -Xaa-Yaa-Zaa-|-(S,diacylglyceryl)Cys-, in which Xaa is hydrophobic (preferably Leu), and Yaa (Ala or Ser) and Zaa (Gly or Ala) have small, neutral side chains.</text>
        <dbReference type="EC" id="3.4.23.36"/>
    </reaction>
</comment>
<comment type="pathway">
    <text evidence="1">Protein modification; lipoprotein biosynthesis (signal peptide cleavage).</text>
</comment>
<comment type="subcellular location">
    <subcellularLocation>
        <location evidence="1">Cell inner membrane</location>
        <topology evidence="1">Multi-pass membrane protein</topology>
    </subcellularLocation>
</comment>
<comment type="similarity">
    <text evidence="1">Belongs to the peptidase A8 family.</text>
</comment>
<gene>
    <name evidence="1" type="primary">lspA</name>
    <name type="ordered locus">ECH74115_0029</name>
</gene>
<keyword id="KW-0064">Aspartyl protease</keyword>
<keyword id="KW-0997">Cell inner membrane</keyword>
<keyword id="KW-1003">Cell membrane</keyword>
<keyword id="KW-0378">Hydrolase</keyword>
<keyword id="KW-0472">Membrane</keyword>
<keyword id="KW-0645">Protease</keyword>
<keyword id="KW-0812">Transmembrane</keyword>
<keyword id="KW-1133">Transmembrane helix</keyword>
<feature type="chain" id="PRO_1000097252" description="Lipoprotein signal peptidase">
    <location>
        <begin position="1"/>
        <end position="164"/>
    </location>
</feature>
<feature type="transmembrane region" description="Helical" evidence="1">
    <location>
        <begin position="12"/>
        <end position="32"/>
    </location>
</feature>
<feature type="transmembrane region" description="Helical" evidence="1">
    <location>
        <begin position="70"/>
        <end position="90"/>
    </location>
</feature>
<feature type="transmembrane region" description="Helical" evidence="1">
    <location>
        <begin position="102"/>
        <end position="122"/>
    </location>
</feature>
<feature type="transmembrane region" description="Helical" evidence="1">
    <location>
        <begin position="137"/>
        <end position="157"/>
    </location>
</feature>
<feature type="active site" evidence="1">
    <location>
        <position position="123"/>
    </location>
</feature>
<feature type="active site" evidence="1">
    <location>
        <position position="141"/>
    </location>
</feature>